<evidence type="ECO:0000255" key="1">
    <source>
        <dbReference type="HAMAP-Rule" id="MF_01395"/>
    </source>
</evidence>
<evidence type="ECO:0000255" key="2">
    <source>
        <dbReference type="PROSITE-ProRule" id="PRU01136"/>
    </source>
</evidence>
<comment type="function">
    <text evidence="1">Component of the acetyl coenzyme A carboxylase (ACC) complex. Biotin carboxylase (BC) catalyzes the carboxylation of biotin on its carrier protein (BCCP) and then the CO(2) group is transferred by the transcarboxylase to acetyl-CoA to form malonyl-CoA.</text>
</comment>
<comment type="catalytic activity">
    <reaction evidence="1">
        <text>N(6)-carboxybiotinyl-L-lysyl-[protein] + acetyl-CoA = N(6)-biotinyl-L-lysyl-[protein] + malonyl-CoA</text>
        <dbReference type="Rhea" id="RHEA:54728"/>
        <dbReference type="Rhea" id="RHEA-COMP:10505"/>
        <dbReference type="Rhea" id="RHEA-COMP:10506"/>
        <dbReference type="ChEBI" id="CHEBI:57288"/>
        <dbReference type="ChEBI" id="CHEBI:57384"/>
        <dbReference type="ChEBI" id="CHEBI:83144"/>
        <dbReference type="ChEBI" id="CHEBI:83145"/>
        <dbReference type="EC" id="2.1.3.15"/>
    </reaction>
</comment>
<comment type="cofactor">
    <cofactor evidence="1">
        <name>Zn(2+)</name>
        <dbReference type="ChEBI" id="CHEBI:29105"/>
    </cofactor>
    <text evidence="1">Binds 1 zinc ion per subunit.</text>
</comment>
<comment type="pathway">
    <text evidence="1">Lipid metabolism; malonyl-CoA biosynthesis; malonyl-CoA from acetyl-CoA: step 1/1.</text>
</comment>
<comment type="subunit">
    <text evidence="1">Acetyl-CoA carboxylase is a heterohexamer composed of biotin carboxyl carrier protein (AccB), biotin carboxylase (AccC) and two subunits each of ACCase subunit alpha (AccA) and ACCase subunit beta (AccD).</text>
</comment>
<comment type="subcellular location">
    <subcellularLocation>
        <location evidence="1">Cytoplasm</location>
    </subcellularLocation>
</comment>
<comment type="similarity">
    <text evidence="1">Belongs to the AccD/PCCB family.</text>
</comment>
<accession>B1HNE3</accession>
<dbReference type="EC" id="2.1.3.15" evidence="1"/>
<dbReference type="EMBL" id="CP000817">
    <property type="protein sequence ID" value="ACA40453.1"/>
    <property type="molecule type" value="Genomic_DNA"/>
</dbReference>
<dbReference type="SMR" id="B1HNE3"/>
<dbReference type="EnsemblBacteria" id="ACA40453">
    <property type="protein sequence ID" value="ACA40453"/>
    <property type="gene ID" value="Bsph_2924"/>
</dbReference>
<dbReference type="KEGG" id="lsp:Bsph_2924"/>
<dbReference type="HOGENOM" id="CLU_015486_1_1_9"/>
<dbReference type="UniPathway" id="UPA00655">
    <property type="reaction ID" value="UER00711"/>
</dbReference>
<dbReference type="Proteomes" id="UP000002164">
    <property type="component" value="Chromosome"/>
</dbReference>
<dbReference type="GO" id="GO:0009317">
    <property type="term" value="C:acetyl-CoA carboxylase complex"/>
    <property type="evidence" value="ECO:0007669"/>
    <property type="project" value="InterPro"/>
</dbReference>
<dbReference type="GO" id="GO:0003989">
    <property type="term" value="F:acetyl-CoA carboxylase activity"/>
    <property type="evidence" value="ECO:0007669"/>
    <property type="project" value="InterPro"/>
</dbReference>
<dbReference type="GO" id="GO:0005524">
    <property type="term" value="F:ATP binding"/>
    <property type="evidence" value="ECO:0007669"/>
    <property type="project" value="UniProtKB-KW"/>
</dbReference>
<dbReference type="GO" id="GO:0016743">
    <property type="term" value="F:carboxyl- or carbamoyltransferase activity"/>
    <property type="evidence" value="ECO:0007669"/>
    <property type="project" value="UniProtKB-UniRule"/>
</dbReference>
<dbReference type="GO" id="GO:0008270">
    <property type="term" value="F:zinc ion binding"/>
    <property type="evidence" value="ECO:0007669"/>
    <property type="project" value="UniProtKB-UniRule"/>
</dbReference>
<dbReference type="GO" id="GO:0006633">
    <property type="term" value="P:fatty acid biosynthetic process"/>
    <property type="evidence" value="ECO:0007669"/>
    <property type="project" value="UniProtKB-KW"/>
</dbReference>
<dbReference type="GO" id="GO:2001295">
    <property type="term" value="P:malonyl-CoA biosynthetic process"/>
    <property type="evidence" value="ECO:0007669"/>
    <property type="project" value="UniProtKB-UniRule"/>
</dbReference>
<dbReference type="Gene3D" id="3.90.226.10">
    <property type="entry name" value="2-enoyl-CoA Hydratase, Chain A, domain 1"/>
    <property type="match status" value="1"/>
</dbReference>
<dbReference type="HAMAP" id="MF_01395">
    <property type="entry name" value="AcetylCoA_CT_beta"/>
    <property type="match status" value="1"/>
</dbReference>
<dbReference type="InterPro" id="IPR034733">
    <property type="entry name" value="AcCoA_carboxyl_beta"/>
</dbReference>
<dbReference type="InterPro" id="IPR000438">
    <property type="entry name" value="Acetyl_CoA_COase_Trfase_b_su"/>
</dbReference>
<dbReference type="InterPro" id="IPR029045">
    <property type="entry name" value="ClpP/crotonase-like_dom_sf"/>
</dbReference>
<dbReference type="InterPro" id="IPR011762">
    <property type="entry name" value="COA_CT_N"/>
</dbReference>
<dbReference type="InterPro" id="IPR041010">
    <property type="entry name" value="Znf-ACC"/>
</dbReference>
<dbReference type="NCBIfam" id="TIGR00515">
    <property type="entry name" value="accD"/>
    <property type="match status" value="1"/>
</dbReference>
<dbReference type="PANTHER" id="PTHR42995">
    <property type="entry name" value="ACETYL-COENZYME A CARBOXYLASE CARBOXYL TRANSFERASE SUBUNIT BETA, CHLOROPLASTIC"/>
    <property type="match status" value="1"/>
</dbReference>
<dbReference type="PANTHER" id="PTHR42995:SF5">
    <property type="entry name" value="ACETYL-COENZYME A CARBOXYLASE CARBOXYL TRANSFERASE SUBUNIT BETA, CHLOROPLASTIC"/>
    <property type="match status" value="1"/>
</dbReference>
<dbReference type="Pfam" id="PF01039">
    <property type="entry name" value="Carboxyl_trans"/>
    <property type="match status" value="1"/>
</dbReference>
<dbReference type="Pfam" id="PF17848">
    <property type="entry name" value="Zn_ribbon_ACC"/>
    <property type="match status" value="1"/>
</dbReference>
<dbReference type="PRINTS" id="PR01070">
    <property type="entry name" value="ACCCTRFRASEB"/>
</dbReference>
<dbReference type="SUPFAM" id="SSF52096">
    <property type="entry name" value="ClpP/crotonase"/>
    <property type="match status" value="1"/>
</dbReference>
<dbReference type="PROSITE" id="PS50980">
    <property type="entry name" value="COA_CT_NTER"/>
    <property type="match status" value="1"/>
</dbReference>
<protein>
    <recommendedName>
        <fullName evidence="1">Acetyl-coenzyme A carboxylase carboxyl transferase subunit beta 1</fullName>
        <shortName evidence="1">ACCase subunit beta 1</shortName>
        <shortName evidence="1">Acetyl-CoA carboxylase carboxyltransferase subunit beta 1</shortName>
        <ecNumber evidence="1">2.1.3.15</ecNumber>
    </recommendedName>
</protein>
<keyword id="KW-0067">ATP-binding</keyword>
<keyword id="KW-0963">Cytoplasm</keyword>
<keyword id="KW-0275">Fatty acid biosynthesis</keyword>
<keyword id="KW-0276">Fatty acid metabolism</keyword>
<keyword id="KW-0444">Lipid biosynthesis</keyword>
<keyword id="KW-0443">Lipid metabolism</keyword>
<keyword id="KW-0479">Metal-binding</keyword>
<keyword id="KW-0547">Nucleotide-binding</keyword>
<keyword id="KW-0808">Transferase</keyword>
<keyword id="KW-0862">Zinc</keyword>
<keyword id="KW-0863">Zinc-finger</keyword>
<sequence>MAIRSLFRKKNEDGQEKGFPEGLMTKCPECRHILLTKELEKNHKVCTKCDHHFKMTAQERVAYFIDEGSFVSMDDHLQTSNPLNFPDYVEKISVAKQQTGLSEAVLTGVGTLDGEEIVVAIMDSHFRMGSMGSVVGEKITRAVEKAIELRVPVIIFTASGGARMQEGILSLMQMVKTSVALKRHSEEGLLFISIMTHPTYGGVSASFASVGDINIAEPQALIGFAGRRVIEETLREKLPNDFQKSEFLLAHGQLDAVFHRKDLRNQVAMLVKMHTKGGVQHV</sequence>
<organism>
    <name type="scientific">Lysinibacillus sphaericus (strain C3-41)</name>
    <dbReference type="NCBI Taxonomy" id="444177"/>
    <lineage>
        <taxon>Bacteria</taxon>
        <taxon>Bacillati</taxon>
        <taxon>Bacillota</taxon>
        <taxon>Bacilli</taxon>
        <taxon>Bacillales</taxon>
        <taxon>Bacillaceae</taxon>
        <taxon>Lysinibacillus</taxon>
    </lineage>
</organism>
<name>ACCD1_LYSSC</name>
<proteinExistence type="inferred from homology"/>
<gene>
    <name evidence="1" type="primary">accD1</name>
    <name type="ordered locus">Bsph_2924</name>
</gene>
<reference key="1">
    <citation type="journal article" date="2008" name="J. Bacteriol.">
        <title>Complete genome sequence of the mosquitocidal bacterium Bacillus sphaericus C3-41 and comparison with those of closely related Bacillus species.</title>
        <authorList>
            <person name="Hu X."/>
            <person name="Fan W."/>
            <person name="Han B."/>
            <person name="Liu H."/>
            <person name="Zheng D."/>
            <person name="Li Q."/>
            <person name="Dong W."/>
            <person name="Yan J."/>
            <person name="Gao M."/>
            <person name="Berry C."/>
            <person name="Yuan Z."/>
        </authorList>
    </citation>
    <scope>NUCLEOTIDE SEQUENCE [LARGE SCALE GENOMIC DNA]</scope>
    <source>
        <strain>C3-41</strain>
    </source>
</reference>
<feature type="chain" id="PRO_0000389787" description="Acetyl-coenzyme A carboxylase carboxyl transferase subunit beta 1">
    <location>
        <begin position="1"/>
        <end position="282"/>
    </location>
</feature>
<feature type="domain" description="CoA carboxyltransferase N-terminal" evidence="2">
    <location>
        <begin position="23"/>
        <end position="282"/>
    </location>
</feature>
<feature type="zinc finger region" description="C4-type" evidence="1">
    <location>
        <begin position="27"/>
        <end position="49"/>
    </location>
</feature>
<feature type="binding site" evidence="1">
    <location>
        <position position="27"/>
    </location>
    <ligand>
        <name>Zn(2+)</name>
        <dbReference type="ChEBI" id="CHEBI:29105"/>
    </ligand>
</feature>
<feature type="binding site" evidence="1">
    <location>
        <position position="30"/>
    </location>
    <ligand>
        <name>Zn(2+)</name>
        <dbReference type="ChEBI" id="CHEBI:29105"/>
    </ligand>
</feature>
<feature type="binding site" evidence="1">
    <location>
        <position position="46"/>
    </location>
    <ligand>
        <name>Zn(2+)</name>
        <dbReference type="ChEBI" id="CHEBI:29105"/>
    </ligand>
</feature>
<feature type="binding site" evidence="1">
    <location>
        <position position="49"/>
    </location>
    <ligand>
        <name>Zn(2+)</name>
        <dbReference type="ChEBI" id="CHEBI:29105"/>
    </ligand>
</feature>